<gene>
    <name evidence="1" type="primary">msrP</name>
    <name type="ordered locus">c2389</name>
</gene>
<name>MSRP_ECOL6</name>
<keyword id="KW-0479">Metal-binding</keyword>
<keyword id="KW-0500">Molybdenum</keyword>
<keyword id="KW-0560">Oxidoreductase</keyword>
<keyword id="KW-0574">Periplasm</keyword>
<keyword id="KW-1185">Reference proteome</keyword>
<keyword id="KW-0732">Signal</keyword>
<reference key="1">
    <citation type="journal article" date="2002" name="Proc. Natl. Acad. Sci. U.S.A.">
        <title>Extensive mosaic structure revealed by the complete genome sequence of uropathogenic Escherichia coli.</title>
        <authorList>
            <person name="Welch R.A."/>
            <person name="Burland V."/>
            <person name="Plunkett G. III"/>
            <person name="Redford P."/>
            <person name="Roesch P."/>
            <person name="Rasko D."/>
            <person name="Buckles E.L."/>
            <person name="Liou S.-R."/>
            <person name="Boutin A."/>
            <person name="Hackett J."/>
            <person name="Stroud D."/>
            <person name="Mayhew G.F."/>
            <person name="Rose D.J."/>
            <person name="Zhou S."/>
            <person name="Schwartz D.C."/>
            <person name="Perna N.T."/>
            <person name="Mobley H.L.T."/>
            <person name="Donnenberg M.S."/>
            <person name="Blattner F.R."/>
        </authorList>
    </citation>
    <scope>NUCLEOTIDE SEQUENCE [LARGE SCALE GENOMIC DNA]</scope>
    <source>
        <strain>CFT073 / ATCC 700928 / UPEC</strain>
    </source>
</reference>
<sequence length="334" mass="37445">MKKNQFLKESDVTAESVFFMKRRQVLKALGISAAAFSLPHAAHADLLSWFKGNDRPPAPAGKPLEFSKPAAWQNNLPLTPADKVSGYNNFYEFGLDKADPAANAGSLKTDPWTLKISGEVAKPLTLDHDDLTRRFPLEERIYRMRCVEAWSMVVPWIGFPLHKLLALAEPTSNAKYVAFETIYAPEQMPGQQDRFIGGGLKYPYVEGLRLDEAMHPLTLMTVGVYGKALPPQNGAPVRLIVPWKYGFKGIKSIVSIKLTRERPPTTWNLVAPDEYGFYANVNPHVDHPRWSQATERFIGSGGILDVQRQPTLLFNGYADQVASLYRGLDLRENF</sequence>
<dbReference type="EC" id="1.8.5.-" evidence="1"/>
<dbReference type="EMBL" id="AE014075">
    <property type="protein sequence ID" value="AAN80848.1"/>
    <property type="molecule type" value="Genomic_DNA"/>
</dbReference>
<dbReference type="RefSeq" id="WP_000740068.1">
    <property type="nucleotide sequence ID" value="NZ_CP051263.1"/>
</dbReference>
<dbReference type="SMR" id="Q8FGI7"/>
<dbReference type="STRING" id="199310.c2389"/>
<dbReference type="KEGG" id="ecc:c2389"/>
<dbReference type="eggNOG" id="COG2041">
    <property type="taxonomic scope" value="Bacteria"/>
</dbReference>
<dbReference type="HOGENOM" id="CLU_045520_0_0_6"/>
<dbReference type="BioCyc" id="ECOL199310:C2389-MONOMER"/>
<dbReference type="Proteomes" id="UP000001410">
    <property type="component" value="Chromosome"/>
</dbReference>
<dbReference type="GO" id="GO:0042597">
    <property type="term" value="C:periplasmic space"/>
    <property type="evidence" value="ECO:0007669"/>
    <property type="project" value="UniProtKB-SubCell"/>
</dbReference>
<dbReference type="GO" id="GO:0046872">
    <property type="term" value="F:metal ion binding"/>
    <property type="evidence" value="ECO:0007669"/>
    <property type="project" value="UniProtKB-KW"/>
</dbReference>
<dbReference type="GO" id="GO:0043546">
    <property type="term" value="F:molybdopterin cofactor binding"/>
    <property type="evidence" value="ECO:0007669"/>
    <property type="project" value="UniProtKB-UniRule"/>
</dbReference>
<dbReference type="GO" id="GO:0016672">
    <property type="term" value="F:oxidoreductase activity, acting on a sulfur group of donors, quinone or similar compound as acceptor"/>
    <property type="evidence" value="ECO:0007669"/>
    <property type="project" value="UniProtKB-UniRule"/>
</dbReference>
<dbReference type="GO" id="GO:0030091">
    <property type="term" value="P:protein repair"/>
    <property type="evidence" value="ECO:0007669"/>
    <property type="project" value="UniProtKB-UniRule"/>
</dbReference>
<dbReference type="CDD" id="cd02107">
    <property type="entry name" value="YedY_like_Moco"/>
    <property type="match status" value="1"/>
</dbReference>
<dbReference type="FunFam" id="3.90.420.10:FF:000001">
    <property type="entry name" value="Protein-methionine-sulfoxide reductase catalytic subunit MsrP"/>
    <property type="match status" value="1"/>
</dbReference>
<dbReference type="Gene3D" id="3.90.420.10">
    <property type="entry name" value="Oxidoreductase, molybdopterin-binding domain"/>
    <property type="match status" value="1"/>
</dbReference>
<dbReference type="HAMAP" id="MF_01206">
    <property type="entry name" value="MsrP"/>
    <property type="match status" value="1"/>
</dbReference>
<dbReference type="InterPro" id="IPR022867">
    <property type="entry name" value="MsrP"/>
</dbReference>
<dbReference type="InterPro" id="IPR000572">
    <property type="entry name" value="OxRdtase_Mopterin-bd_dom"/>
</dbReference>
<dbReference type="InterPro" id="IPR036374">
    <property type="entry name" value="OxRdtase_Mopterin-bd_sf"/>
</dbReference>
<dbReference type="InterPro" id="IPR006311">
    <property type="entry name" value="TAT_signal"/>
</dbReference>
<dbReference type="NCBIfam" id="NF003767">
    <property type="entry name" value="PRK05363.1"/>
    <property type="match status" value="1"/>
</dbReference>
<dbReference type="PANTHER" id="PTHR43032">
    <property type="entry name" value="PROTEIN-METHIONINE-SULFOXIDE REDUCTASE"/>
    <property type="match status" value="1"/>
</dbReference>
<dbReference type="PANTHER" id="PTHR43032:SF3">
    <property type="entry name" value="PROTEIN-METHIONINE-SULFOXIDE REDUCTASE CATALYTIC SUBUNIT MSRP"/>
    <property type="match status" value="1"/>
</dbReference>
<dbReference type="Pfam" id="PF00174">
    <property type="entry name" value="Oxidored_molyb"/>
    <property type="match status" value="1"/>
</dbReference>
<dbReference type="SUPFAM" id="SSF56524">
    <property type="entry name" value="Oxidoreductase molybdopterin-binding domain"/>
    <property type="match status" value="1"/>
</dbReference>
<dbReference type="PROSITE" id="PS51318">
    <property type="entry name" value="TAT"/>
    <property type="match status" value="1"/>
</dbReference>
<protein>
    <recommendedName>
        <fullName evidence="1">Protein-methionine-sulfoxide reductase catalytic subunit MsrP</fullName>
        <ecNumber evidence="1">1.8.5.-</ecNumber>
    </recommendedName>
</protein>
<feature type="signal peptide" description="Tat-type signal" evidence="1">
    <location>
        <begin position="1"/>
        <end position="44"/>
    </location>
</feature>
<feature type="chain" id="PRO_0000070685" description="Protein-methionine-sulfoxide reductase catalytic subunit MsrP" evidence="1">
    <location>
        <begin position="45"/>
        <end position="334"/>
    </location>
</feature>
<feature type="binding site" evidence="1">
    <location>
        <position position="88"/>
    </location>
    <ligand>
        <name>Mo-molybdopterin</name>
        <dbReference type="ChEBI" id="CHEBI:71302"/>
    </ligand>
</feature>
<feature type="binding site" evidence="1">
    <location>
        <begin position="91"/>
        <end position="92"/>
    </location>
    <ligand>
        <name>Mo-molybdopterin</name>
        <dbReference type="ChEBI" id="CHEBI:71302"/>
    </ligand>
</feature>
<feature type="binding site" evidence="1">
    <location>
        <position position="146"/>
    </location>
    <ligand>
        <name>Mo-molybdopterin</name>
        <dbReference type="ChEBI" id="CHEBI:71302"/>
    </ligand>
    <ligandPart>
        <name>Mo</name>
        <dbReference type="ChEBI" id="CHEBI:28685"/>
    </ligandPart>
</feature>
<feature type="binding site" evidence="1">
    <location>
        <position position="181"/>
    </location>
    <ligand>
        <name>Mo-molybdopterin</name>
        <dbReference type="ChEBI" id="CHEBI:71302"/>
    </ligand>
</feature>
<feature type="binding site" evidence="1">
    <location>
        <position position="233"/>
    </location>
    <ligand>
        <name>Mo-molybdopterin</name>
        <dbReference type="ChEBI" id="CHEBI:71302"/>
    </ligand>
</feature>
<feature type="binding site" evidence="1">
    <location>
        <position position="238"/>
    </location>
    <ligand>
        <name>Mo-molybdopterin</name>
        <dbReference type="ChEBI" id="CHEBI:71302"/>
    </ligand>
</feature>
<feature type="binding site" evidence="1">
    <location>
        <begin position="249"/>
        <end position="251"/>
    </location>
    <ligand>
        <name>Mo-molybdopterin</name>
        <dbReference type="ChEBI" id="CHEBI:71302"/>
    </ligand>
</feature>
<evidence type="ECO:0000255" key="1">
    <source>
        <dbReference type="HAMAP-Rule" id="MF_01206"/>
    </source>
</evidence>
<comment type="function">
    <text evidence="1">Part of the MsrPQ system that repairs oxidized periplasmic proteins containing methionine sulfoxide residues (Met-O), using respiratory chain electrons. Thus protects these proteins from oxidative-stress damage caused by reactive species of oxygen and chlorine generated by the host defense mechanisms. MsrPQ is essential for the maintenance of envelope integrity under bleach stress, rescuing a wide series of structurally unrelated periplasmic proteins from methionine oxidation, including the primary periplasmic chaperone SurA and the lipoprotein Pal. The catalytic subunit MsrP is non-stereospecific, being able to reduce both (R-) and (S-) diastereoisomers of methionine sulfoxide.</text>
</comment>
<comment type="catalytic activity">
    <reaction evidence="1">
        <text>L-methionyl-[protein] + a quinone + H2O = L-methionyl-(S)-S-oxide-[protein] + a quinol</text>
        <dbReference type="Rhea" id="RHEA:51292"/>
        <dbReference type="Rhea" id="RHEA-COMP:12313"/>
        <dbReference type="Rhea" id="RHEA-COMP:12315"/>
        <dbReference type="ChEBI" id="CHEBI:15377"/>
        <dbReference type="ChEBI" id="CHEBI:16044"/>
        <dbReference type="ChEBI" id="CHEBI:24646"/>
        <dbReference type="ChEBI" id="CHEBI:44120"/>
        <dbReference type="ChEBI" id="CHEBI:132124"/>
    </reaction>
</comment>
<comment type="catalytic activity">
    <reaction evidence="1">
        <text>L-methionyl-[protein] + a quinone + H2O = L-methionyl-(R)-S-oxide-[protein] + a quinol</text>
        <dbReference type="Rhea" id="RHEA:51296"/>
        <dbReference type="Rhea" id="RHEA-COMP:12313"/>
        <dbReference type="Rhea" id="RHEA-COMP:12314"/>
        <dbReference type="ChEBI" id="CHEBI:15377"/>
        <dbReference type="ChEBI" id="CHEBI:16044"/>
        <dbReference type="ChEBI" id="CHEBI:24646"/>
        <dbReference type="ChEBI" id="CHEBI:45764"/>
        <dbReference type="ChEBI" id="CHEBI:132124"/>
    </reaction>
</comment>
<comment type="cofactor">
    <cofactor evidence="1">
        <name>Mo-molybdopterin</name>
        <dbReference type="ChEBI" id="CHEBI:71302"/>
    </cofactor>
    <text evidence="1">Binds 1 Mo-molybdopterin (Mo-MPT) cofactor per subunit.</text>
</comment>
<comment type="subunit">
    <text evidence="1">Heterodimer of a catalytic subunit (MsrP) and a heme-binding subunit (MsrQ).</text>
</comment>
<comment type="subcellular location">
    <subcellularLocation>
        <location evidence="1">Periplasm</location>
    </subcellularLocation>
    <text evidence="1">Is attached to the inner membrane when interacting with the MsrQ subunit.</text>
</comment>
<comment type="PTM">
    <text evidence="1">Predicted to be exported by the Tat system. The position of the signal peptide cleavage has not been experimentally proven.</text>
</comment>
<comment type="similarity">
    <text evidence="1">Belongs to the MsrP family.</text>
</comment>
<accession>Q8FGI7</accession>
<organism>
    <name type="scientific">Escherichia coli O6:H1 (strain CFT073 / ATCC 700928 / UPEC)</name>
    <dbReference type="NCBI Taxonomy" id="199310"/>
    <lineage>
        <taxon>Bacteria</taxon>
        <taxon>Pseudomonadati</taxon>
        <taxon>Pseudomonadota</taxon>
        <taxon>Gammaproteobacteria</taxon>
        <taxon>Enterobacterales</taxon>
        <taxon>Enterobacteriaceae</taxon>
        <taxon>Escherichia</taxon>
    </lineage>
</organism>
<proteinExistence type="inferred from homology"/>